<accession>Q4L880</accession>
<keyword id="KW-0687">Ribonucleoprotein</keyword>
<keyword id="KW-0689">Ribosomal protein</keyword>
<protein>
    <recommendedName>
        <fullName evidence="1">Small ribosomal subunit protein uS9</fullName>
    </recommendedName>
    <alternativeName>
        <fullName evidence="3">30S ribosomal protein S9</fullName>
    </alternativeName>
</protein>
<sequence>MAQVEYRGTGRRKNSVARVRLVPGEGNITVNERDVREYLPFESLILDLNQPFDVTETKGNYDVLVNVHGGGFTGQAQAIRHGIARALLEADPEYRGSLKRAGLLTRDPRMKERKKPGLKKARRSPQFSKR</sequence>
<dbReference type="EMBL" id="AP006716">
    <property type="protein sequence ID" value="BAE04145.1"/>
    <property type="molecule type" value="Genomic_DNA"/>
</dbReference>
<dbReference type="RefSeq" id="WP_011275150.1">
    <property type="nucleotide sequence ID" value="NC_007168.1"/>
</dbReference>
<dbReference type="SMR" id="Q4L880"/>
<dbReference type="GeneID" id="93780224"/>
<dbReference type="KEGG" id="sha:SH0836"/>
<dbReference type="eggNOG" id="COG0103">
    <property type="taxonomic scope" value="Bacteria"/>
</dbReference>
<dbReference type="HOGENOM" id="CLU_046483_2_1_9"/>
<dbReference type="Proteomes" id="UP000000543">
    <property type="component" value="Chromosome"/>
</dbReference>
<dbReference type="GO" id="GO:0022627">
    <property type="term" value="C:cytosolic small ribosomal subunit"/>
    <property type="evidence" value="ECO:0007669"/>
    <property type="project" value="TreeGrafter"/>
</dbReference>
<dbReference type="GO" id="GO:0003723">
    <property type="term" value="F:RNA binding"/>
    <property type="evidence" value="ECO:0007669"/>
    <property type="project" value="TreeGrafter"/>
</dbReference>
<dbReference type="GO" id="GO:0003735">
    <property type="term" value="F:structural constituent of ribosome"/>
    <property type="evidence" value="ECO:0007669"/>
    <property type="project" value="InterPro"/>
</dbReference>
<dbReference type="GO" id="GO:0006412">
    <property type="term" value="P:translation"/>
    <property type="evidence" value="ECO:0007669"/>
    <property type="project" value="UniProtKB-UniRule"/>
</dbReference>
<dbReference type="FunFam" id="3.30.230.10:FF:000001">
    <property type="entry name" value="30S ribosomal protein S9"/>
    <property type="match status" value="1"/>
</dbReference>
<dbReference type="Gene3D" id="3.30.230.10">
    <property type="match status" value="1"/>
</dbReference>
<dbReference type="HAMAP" id="MF_00532_B">
    <property type="entry name" value="Ribosomal_uS9_B"/>
    <property type="match status" value="1"/>
</dbReference>
<dbReference type="InterPro" id="IPR020568">
    <property type="entry name" value="Ribosomal_Su5_D2-typ_SF"/>
</dbReference>
<dbReference type="InterPro" id="IPR000754">
    <property type="entry name" value="Ribosomal_uS9"/>
</dbReference>
<dbReference type="InterPro" id="IPR023035">
    <property type="entry name" value="Ribosomal_uS9_bac/plastid"/>
</dbReference>
<dbReference type="InterPro" id="IPR020574">
    <property type="entry name" value="Ribosomal_uS9_CS"/>
</dbReference>
<dbReference type="InterPro" id="IPR014721">
    <property type="entry name" value="Ribsml_uS5_D2-typ_fold_subgr"/>
</dbReference>
<dbReference type="NCBIfam" id="NF001099">
    <property type="entry name" value="PRK00132.1"/>
    <property type="match status" value="1"/>
</dbReference>
<dbReference type="PANTHER" id="PTHR21569">
    <property type="entry name" value="RIBOSOMAL PROTEIN S9"/>
    <property type="match status" value="1"/>
</dbReference>
<dbReference type="PANTHER" id="PTHR21569:SF1">
    <property type="entry name" value="SMALL RIBOSOMAL SUBUNIT PROTEIN US9M"/>
    <property type="match status" value="1"/>
</dbReference>
<dbReference type="Pfam" id="PF00380">
    <property type="entry name" value="Ribosomal_S9"/>
    <property type="match status" value="1"/>
</dbReference>
<dbReference type="SUPFAM" id="SSF54211">
    <property type="entry name" value="Ribosomal protein S5 domain 2-like"/>
    <property type="match status" value="1"/>
</dbReference>
<dbReference type="PROSITE" id="PS00360">
    <property type="entry name" value="RIBOSOMAL_S9"/>
    <property type="match status" value="1"/>
</dbReference>
<reference key="1">
    <citation type="journal article" date="2005" name="J. Bacteriol.">
        <title>Whole-genome sequencing of Staphylococcus haemolyticus uncovers the extreme plasticity of its genome and the evolution of human-colonizing staphylococcal species.</title>
        <authorList>
            <person name="Takeuchi F."/>
            <person name="Watanabe S."/>
            <person name="Baba T."/>
            <person name="Yuzawa H."/>
            <person name="Ito T."/>
            <person name="Morimoto Y."/>
            <person name="Kuroda M."/>
            <person name="Cui L."/>
            <person name="Takahashi M."/>
            <person name="Ankai A."/>
            <person name="Baba S."/>
            <person name="Fukui S."/>
            <person name="Lee J.C."/>
            <person name="Hiramatsu K."/>
        </authorList>
    </citation>
    <scope>NUCLEOTIDE SEQUENCE [LARGE SCALE GENOMIC DNA]</scope>
    <source>
        <strain>JCSC1435</strain>
    </source>
</reference>
<evidence type="ECO:0000255" key="1">
    <source>
        <dbReference type="HAMAP-Rule" id="MF_00532"/>
    </source>
</evidence>
<evidence type="ECO:0000256" key="2">
    <source>
        <dbReference type="SAM" id="MobiDB-lite"/>
    </source>
</evidence>
<evidence type="ECO:0000305" key="3"/>
<organism>
    <name type="scientific">Staphylococcus haemolyticus (strain JCSC1435)</name>
    <dbReference type="NCBI Taxonomy" id="279808"/>
    <lineage>
        <taxon>Bacteria</taxon>
        <taxon>Bacillati</taxon>
        <taxon>Bacillota</taxon>
        <taxon>Bacilli</taxon>
        <taxon>Bacillales</taxon>
        <taxon>Staphylococcaceae</taxon>
        <taxon>Staphylococcus</taxon>
    </lineage>
</organism>
<feature type="chain" id="PRO_0000111412" description="Small ribosomal subunit protein uS9">
    <location>
        <begin position="1"/>
        <end position="130"/>
    </location>
</feature>
<feature type="region of interest" description="Disordered" evidence="2">
    <location>
        <begin position="98"/>
        <end position="130"/>
    </location>
</feature>
<feature type="compositionally biased region" description="Basic residues" evidence="2">
    <location>
        <begin position="111"/>
        <end position="130"/>
    </location>
</feature>
<comment type="similarity">
    <text evidence="1">Belongs to the universal ribosomal protein uS9 family.</text>
</comment>
<gene>
    <name evidence="1" type="primary">rpsI</name>
    <name type="ordered locus">SH0836</name>
</gene>
<proteinExistence type="inferred from homology"/>
<name>RS9_STAHJ</name>